<reference key="1">
    <citation type="submission" date="2007-08" db="EMBL/GenBank/DDBJ databases">
        <title>Complete sequence of Shewanella sediminis HAW-EB3.</title>
        <authorList>
            <consortium name="US DOE Joint Genome Institute"/>
            <person name="Copeland A."/>
            <person name="Lucas S."/>
            <person name="Lapidus A."/>
            <person name="Barry K."/>
            <person name="Glavina del Rio T."/>
            <person name="Dalin E."/>
            <person name="Tice H."/>
            <person name="Pitluck S."/>
            <person name="Chertkov O."/>
            <person name="Brettin T."/>
            <person name="Bruce D."/>
            <person name="Detter J.C."/>
            <person name="Han C."/>
            <person name="Schmutz J."/>
            <person name="Larimer F."/>
            <person name="Land M."/>
            <person name="Hauser L."/>
            <person name="Kyrpides N."/>
            <person name="Kim E."/>
            <person name="Zhao J.-S."/>
            <person name="Richardson P."/>
        </authorList>
    </citation>
    <scope>NUCLEOTIDE SEQUENCE [LARGE SCALE GENOMIC DNA]</scope>
    <source>
        <strain>HAW-EB3</strain>
    </source>
</reference>
<proteinExistence type="inferred from homology"/>
<organism>
    <name type="scientific">Shewanella sediminis (strain HAW-EB3)</name>
    <dbReference type="NCBI Taxonomy" id="425104"/>
    <lineage>
        <taxon>Bacteria</taxon>
        <taxon>Pseudomonadati</taxon>
        <taxon>Pseudomonadota</taxon>
        <taxon>Gammaproteobacteria</taxon>
        <taxon>Alteromonadales</taxon>
        <taxon>Shewanellaceae</taxon>
        <taxon>Shewanella</taxon>
    </lineage>
</organism>
<evidence type="ECO:0000255" key="1">
    <source>
        <dbReference type="HAMAP-Rule" id="MF_00046"/>
    </source>
</evidence>
<dbReference type="EC" id="6.3.2.8" evidence="1"/>
<dbReference type="EMBL" id="CP000821">
    <property type="protein sequence ID" value="ABV35024.1"/>
    <property type="molecule type" value="Genomic_DNA"/>
</dbReference>
<dbReference type="RefSeq" id="WP_012140761.1">
    <property type="nucleotide sequence ID" value="NC_009831.1"/>
</dbReference>
<dbReference type="SMR" id="A8FQA1"/>
<dbReference type="STRING" id="425104.Ssed_0411"/>
<dbReference type="KEGG" id="sse:Ssed_0411"/>
<dbReference type="eggNOG" id="COG0773">
    <property type="taxonomic scope" value="Bacteria"/>
</dbReference>
<dbReference type="HOGENOM" id="CLU_028104_2_2_6"/>
<dbReference type="OrthoDB" id="9804126at2"/>
<dbReference type="UniPathway" id="UPA00219"/>
<dbReference type="Proteomes" id="UP000002015">
    <property type="component" value="Chromosome"/>
</dbReference>
<dbReference type="GO" id="GO:0005737">
    <property type="term" value="C:cytoplasm"/>
    <property type="evidence" value="ECO:0007669"/>
    <property type="project" value="UniProtKB-SubCell"/>
</dbReference>
<dbReference type="GO" id="GO:0005524">
    <property type="term" value="F:ATP binding"/>
    <property type="evidence" value="ECO:0007669"/>
    <property type="project" value="UniProtKB-UniRule"/>
</dbReference>
<dbReference type="GO" id="GO:0008763">
    <property type="term" value="F:UDP-N-acetylmuramate-L-alanine ligase activity"/>
    <property type="evidence" value="ECO:0007669"/>
    <property type="project" value="UniProtKB-UniRule"/>
</dbReference>
<dbReference type="GO" id="GO:0051301">
    <property type="term" value="P:cell division"/>
    <property type="evidence" value="ECO:0007669"/>
    <property type="project" value="UniProtKB-KW"/>
</dbReference>
<dbReference type="GO" id="GO:0071555">
    <property type="term" value="P:cell wall organization"/>
    <property type="evidence" value="ECO:0007669"/>
    <property type="project" value="UniProtKB-KW"/>
</dbReference>
<dbReference type="GO" id="GO:0009252">
    <property type="term" value="P:peptidoglycan biosynthetic process"/>
    <property type="evidence" value="ECO:0007669"/>
    <property type="project" value="UniProtKB-UniRule"/>
</dbReference>
<dbReference type="GO" id="GO:0008360">
    <property type="term" value="P:regulation of cell shape"/>
    <property type="evidence" value="ECO:0007669"/>
    <property type="project" value="UniProtKB-KW"/>
</dbReference>
<dbReference type="FunFam" id="3.40.1190.10:FF:000001">
    <property type="entry name" value="UDP-N-acetylmuramate--L-alanine ligase"/>
    <property type="match status" value="1"/>
</dbReference>
<dbReference type="FunFam" id="3.40.50.720:FF:000046">
    <property type="entry name" value="UDP-N-acetylmuramate--L-alanine ligase"/>
    <property type="match status" value="1"/>
</dbReference>
<dbReference type="Gene3D" id="3.90.190.20">
    <property type="entry name" value="Mur ligase, C-terminal domain"/>
    <property type="match status" value="1"/>
</dbReference>
<dbReference type="Gene3D" id="3.40.1190.10">
    <property type="entry name" value="Mur-like, catalytic domain"/>
    <property type="match status" value="1"/>
</dbReference>
<dbReference type="Gene3D" id="3.40.50.720">
    <property type="entry name" value="NAD(P)-binding Rossmann-like Domain"/>
    <property type="match status" value="1"/>
</dbReference>
<dbReference type="HAMAP" id="MF_00046">
    <property type="entry name" value="MurC"/>
    <property type="match status" value="1"/>
</dbReference>
<dbReference type="InterPro" id="IPR036565">
    <property type="entry name" value="Mur-like_cat_sf"/>
</dbReference>
<dbReference type="InterPro" id="IPR004101">
    <property type="entry name" value="Mur_ligase_C"/>
</dbReference>
<dbReference type="InterPro" id="IPR036615">
    <property type="entry name" value="Mur_ligase_C_dom_sf"/>
</dbReference>
<dbReference type="InterPro" id="IPR013221">
    <property type="entry name" value="Mur_ligase_cen"/>
</dbReference>
<dbReference type="InterPro" id="IPR000713">
    <property type="entry name" value="Mur_ligase_N"/>
</dbReference>
<dbReference type="InterPro" id="IPR050061">
    <property type="entry name" value="MurCDEF_pg_biosynth"/>
</dbReference>
<dbReference type="InterPro" id="IPR005758">
    <property type="entry name" value="UDP-N-AcMur_Ala_ligase_MurC"/>
</dbReference>
<dbReference type="NCBIfam" id="TIGR01082">
    <property type="entry name" value="murC"/>
    <property type="match status" value="1"/>
</dbReference>
<dbReference type="PANTHER" id="PTHR43445:SF3">
    <property type="entry name" value="UDP-N-ACETYLMURAMATE--L-ALANINE LIGASE"/>
    <property type="match status" value="1"/>
</dbReference>
<dbReference type="PANTHER" id="PTHR43445">
    <property type="entry name" value="UDP-N-ACETYLMURAMATE--L-ALANINE LIGASE-RELATED"/>
    <property type="match status" value="1"/>
</dbReference>
<dbReference type="Pfam" id="PF01225">
    <property type="entry name" value="Mur_ligase"/>
    <property type="match status" value="1"/>
</dbReference>
<dbReference type="Pfam" id="PF02875">
    <property type="entry name" value="Mur_ligase_C"/>
    <property type="match status" value="1"/>
</dbReference>
<dbReference type="Pfam" id="PF08245">
    <property type="entry name" value="Mur_ligase_M"/>
    <property type="match status" value="1"/>
</dbReference>
<dbReference type="SUPFAM" id="SSF51984">
    <property type="entry name" value="MurCD N-terminal domain"/>
    <property type="match status" value="1"/>
</dbReference>
<dbReference type="SUPFAM" id="SSF53623">
    <property type="entry name" value="MurD-like peptide ligases, catalytic domain"/>
    <property type="match status" value="1"/>
</dbReference>
<dbReference type="SUPFAM" id="SSF53244">
    <property type="entry name" value="MurD-like peptide ligases, peptide-binding domain"/>
    <property type="match status" value="1"/>
</dbReference>
<comment type="function">
    <text evidence="1">Cell wall formation.</text>
</comment>
<comment type="catalytic activity">
    <reaction evidence="1">
        <text>UDP-N-acetyl-alpha-D-muramate + L-alanine + ATP = UDP-N-acetyl-alpha-D-muramoyl-L-alanine + ADP + phosphate + H(+)</text>
        <dbReference type="Rhea" id="RHEA:23372"/>
        <dbReference type="ChEBI" id="CHEBI:15378"/>
        <dbReference type="ChEBI" id="CHEBI:30616"/>
        <dbReference type="ChEBI" id="CHEBI:43474"/>
        <dbReference type="ChEBI" id="CHEBI:57972"/>
        <dbReference type="ChEBI" id="CHEBI:70757"/>
        <dbReference type="ChEBI" id="CHEBI:83898"/>
        <dbReference type="ChEBI" id="CHEBI:456216"/>
        <dbReference type="EC" id="6.3.2.8"/>
    </reaction>
</comment>
<comment type="pathway">
    <text evidence="1">Cell wall biogenesis; peptidoglycan biosynthesis.</text>
</comment>
<comment type="subcellular location">
    <subcellularLocation>
        <location evidence="1">Cytoplasm</location>
    </subcellularLocation>
</comment>
<comment type="similarity">
    <text evidence="1">Belongs to the MurCDEF family.</text>
</comment>
<gene>
    <name evidence="1" type="primary">murC</name>
    <name type="ordered locus">Ssed_0411</name>
</gene>
<keyword id="KW-0067">ATP-binding</keyword>
<keyword id="KW-0131">Cell cycle</keyword>
<keyword id="KW-0132">Cell division</keyword>
<keyword id="KW-0133">Cell shape</keyword>
<keyword id="KW-0961">Cell wall biogenesis/degradation</keyword>
<keyword id="KW-0963">Cytoplasm</keyword>
<keyword id="KW-0436">Ligase</keyword>
<keyword id="KW-0547">Nucleotide-binding</keyword>
<keyword id="KW-0573">Peptidoglycan synthesis</keyword>
<keyword id="KW-1185">Reference proteome</keyword>
<feature type="chain" id="PRO_1000074756" description="UDP-N-acetylmuramate--L-alanine ligase">
    <location>
        <begin position="1"/>
        <end position="489"/>
    </location>
</feature>
<feature type="binding site" evidence="1">
    <location>
        <begin position="128"/>
        <end position="134"/>
    </location>
    <ligand>
        <name>ATP</name>
        <dbReference type="ChEBI" id="CHEBI:30616"/>
    </ligand>
</feature>
<protein>
    <recommendedName>
        <fullName evidence="1">UDP-N-acetylmuramate--L-alanine ligase</fullName>
        <ecNumber evidence="1">6.3.2.8</ecNumber>
    </recommendedName>
    <alternativeName>
        <fullName evidence="1">UDP-N-acetylmuramoyl-L-alanine synthetase</fullName>
    </alternativeName>
</protein>
<sequence length="489" mass="53093">MSKNQEKYSQLRSIIPEMRRVKHIYFVGIGGAGMGGIAEVLVNEGYKLSGSDIAENAVTQRLASLGAKIHIGHREEQVHGADVVVVSTAISADNPELLEAQALRIPVVQRAEMLAELMRYRHGVAVAGTHGKTTTTSLIASVYGQAERDPTFVIGGLLNSAGTNARLGHSRYLIAEADESDASFLHLQPMVSVVTNIEADHMDTYEGDFEKLKSTFIDFLHNLPFYGVAVMCIDDPVVRELLPKVGRKIVTYGFSEDADVQALNFVQEAYLSRFTLRRAGVEDMEVVVNLPGQHNVLNALAAIAVATEDEIDDAAIIQALADFQGIGRRFEQLGCFDTNKGEMVLVDDYGHHPSEVAATIKAAKAGWPEKRLVMVYQPHRYSRTRDLYDDFVEVLSQVDCLLLLDVYAAGESPVPGADSRALCRSIRQRGQLDPIFVSDSEQLLSLLPDVLQAGDLVLTQGAGNIGAIAKQLSLSSLGFDLAASGTGKE</sequence>
<accession>A8FQA1</accession>
<name>MURC_SHESH</name>